<protein>
    <recommendedName>
        <fullName evidence="1">Ribosomal RNA small subunit methyltransferase A</fullName>
        <ecNumber evidence="1">2.1.1.182</ecNumber>
    </recommendedName>
    <alternativeName>
        <fullName evidence="1">16S rRNA (adenine(1518)-N(6)/adenine(1519)-N(6))-dimethyltransferase</fullName>
    </alternativeName>
    <alternativeName>
        <fullName evidence="1">16S rRNA dimethyladenosine transferase</fullName>
    </alternativeName>
    <alternativeName>
        <fullName evidence="1">16S rRNA dimethylase</fullName>
    </alternativeName>
    <alternativeName>
        <fullName evidence="1">S-adenosylmethionine-6-N', N'-adenosyl(rRNA) dimethyltransferase</fullName>
    </alternativeName>
</protein>
<reference key="1">
    <citation type="journal article" date="2000" name="Nature">
        <title>Complete genome sequence of Pseudomonas aeruginosa PAO1, an opportunistic pathogen.</title>
        <authorList>
            <person name="Stover C.K."/>
            <person name="Pham X.-Q.T."/>
            <person name="Erwin A.L."/>
            <person name="Mizoguchi S.D."/>
            <person name="Warrener P."/>
            <person name="Hickey M.J."/>
            <person name="Brinkman F.S.L."/>
            <person name="Hufnagle W.O."/>
            <person name="Kowalik D.J."/>
            <person name="Lagrou M."/>
            <person name="Garber R.L."/>
            <person name="Goltry L."/>
            <person name="Tolentino E."/>
            <person name="Westbrock-Wadman S."/>
            <person name="Yuan Y."/>
            <person name="Brody L.L."/>
            <person name="Coulter S.N."/>
            <person name="Folger K.R."/>
            <person name="Kas A."/>
            <person name="Larbig K."/>
            <person name="Lim R.M."/>
            <person name="Smith K.A."/>
            <person name="Spencer D.H."/>
            <person name="Wong G.K.-S."/>
            <person name="Wu Z."/>
            <person name="Paulsen I.T."/>
            <person name="Reizer J."/>
            <person name="Saier M.H. Jr."/>
            <person name="Hancock R.E.W."/>
            <person name="Lory S."/>
            <person name="Olson M.V."/>
        </authorList>
    </citation>
    <scope>NUCLEOTIDE SEQUENCE [LARGE SCALE GENOMIC DNA]</scope>
    <source>
        <strain>ATCC 15692 / DSM 22644 / CIP 104116 / JCM 14847 / LMG 12228 / 1C / PRS 101 / PAO1</strain>
    </source>
</reference>
<proteinExistence type="inferred from homology"/>
<organism>
    <name type="scientific">Pseudomonas aeruginosa (strain ATCC 15692 / DSM 22644 / CIP 104116 / JCM 14847 / LMG 12228 / 1C / PRS 101 / PAO1)</name>
    <dbReference type="NCBI Taxonomy" id="208964"/>
    <lineage>
        <taxon>Bacteria</taxon>
        <taxon>Pseudomonadati</taxon>
        <taxon>Pseudomonadota</taxon>
        <taxon>Gammaproteobacteria</taxon>
        <taxon>Pseudomonadales</taxon>
        <taxon>Pseudomonadaceae</taxon>
        <taxon>Pseudomonas</taxon>
    </lineage>
</organism>
<accession>Q9I5U5</accession>
<evidence type="ECO:0000255" key="1">
    <source>
        <dbReference type="HAMAP-Rule" id="MF_00607"/>
    </source>
</evidence>
<feature type="chain" id="PRO_0000101586" description="Ribosomal RNA small subunit methyltransferase A">
    <location>
        <begin position="1"/>
        <end position="268"/>
    </location>
</feature>
<feature type="binding site" evidence="1">
    <location>
        <position position="16"/>
    </location>
    <ligand>
        <name>S-adenosyl-L-methionine</name>
        <dbReference type="ChEBI" id="CHEBI:59789"/>
    </ligand>
</feature>
<feature type="binding site" evidence="1">
    <location>
        <position position="18"/>
    </location>
    <ligand>
        <name>S-adenosyl-L-methionine</name>
        <dbReference type="ChEBI" id="CHEBI:59789"/>
    </ligand>
</feature>
<feature type="binding site" evidence="1">
    <location>
        <position position="43"/>
    </location>
    <ligand>
        <name>S-adenosyl-L-methionine</name>
        <dbReference type="ChEBI" id="CHEBI:59789"/>
    </ligand>
</feature>
<feature type="binding site" evidence="1">
    <location>
        <position position="64"/>
    </location>
    <ligand>
        <name>S-adenosyl-L-methionine</name>
        <dbReference type="ChEBI" id="CHEBI:59789"/>
    </ligand>
</feature>
<feature type="binding site" evidence="1">
    <location>
        <position position="89"/>
    </location>
    <ligand>
        <name>S-adenosyl-L-methionine</name>
        <dbReference type="ChEBI" id="CHEBI:59789"/>
    </ligand>
</feature>
<feature type="binding site" evidence="1">
    <location>
        <position position="110"/>
    </location>
    <ligand>
        <name>S-adenosyl-L-methionine</name>
        <dbReference type="ChEBI" id="CHEBI:59789"/>
    </ligand>
</feature>
<comment type="function">
    <text evidence="1">Specifically dimethylates two adjacent adenosines (A1518 and A1519) in the loop of a conserved hairpin near the 3'-end of 16S rRNA in the 30S particle. May play a critical role in biogenesis of 30S subunits.</text>
</comment>
<comment type="catalytic activity">
    <reaction evidence="1">
        <text>adenosine(1518)/adenosine(1519) in 16S rRNA + 4 S-adenosyl-L-methionine = N(6)-dimethyladenosine(1518)/N(6)-dimethyladenosine(1519) in 16S rRNA + 4 S-adenosyl-L-homocysteine + 4 H(+)</text>
        <dbReference type="Rhea" id="RHEA:19609"/>
        <dbReference type="Rhea" id="RHEA-COMP:10232"/>
        <dbReference type="Rhea" id="RHEA-COMP:10233"/>
        <dbReference type="ChEBI" id="CHEBI:15378"/>
        <dbReference type="ChEBI" id="CHEBI:57856"/>
        <dbReference type="ChEBI" id="CHEBI:59789"/>
        <dbReference type="ChEBI" id="CHEBI:74411"/>
        <dbReference type="ChEBI" id="CHEBI:74493"/>
        <dbReference type="EC" id="2.1.1.182"/>
    </reaction>
</comment>
<comment type="subcellular location">
    <subcellularLocation>
        <location evidence="1">Cytoplasm</location>
    </subcellularLocation>
</comment>
<comment type="similarity">
    <text evidence="1">Belongs to the class I-like SAM-binding methyltransferase superfamily. rRNA adenine N(6)-methyltransferase family. RsmA subfamily.</text>
</comment>
<name>RSMA_PSEAE</name>
<sequence>MSELYQHRARKRFGQNFLHDAGVIHRILRAIHAREGQRLLEIGPGQGALTEGLLGSGARLDVIELDQDLIPLLKLKFGLESRFSLHQGDALKFDFASLVESGEKLRVVGNLPYNISTPLIFHLLEHAPVIEDMHFMLQKEVVERLAATPGGGDWGRLSIMVQYHCRVEHLFNVGPGAFNPPPKVDSAIVRLTPFAEPPHPARDPKLLERVVREAFNQRRKTLRNTLKPLLSVEDIEAAEVDPTLRPEQLDLAAFVRLANQLAELPGNR</sequence>
<gene>
    <name evidence="1" type="primary">rsmA</name>
    <name evidence="1" type="synonym">ksgA</name>
    <name type="ordered locus">PA0592</name>
</gene>
<dbReference type="EC" id="2.1.1.182" evidence="1"/>
<dbReference type="EMBL" id="AE004091">
    <property type="protein sequence ID" value="AAG03981.1"/>
    <property type="molecule type" value="Genomic_DNA"/>
</dbReference>
<dbReference type="PIR" id="H83571">
    <property type="entry name" value="H83571"/>
</dbReference>
<dbReference type="RefSeq" id="NP_249283.1">
    <property type="nucleotide sequence ID" value="NC_002516.2"/>
</dbReference>
<dbReference type="RefSeq" id="WP_003113212.1">
    <property type="nucleotide sequence ID" value="NZ_QZGE01000010.1"/>
</dbReference>
<dbReference type="SMR" id="Q9I5U5"/>
<dbReference type="FunCoup" id="Q9I5U5">
    <property type="interactions" value="654"/>
</dbReference>
<dbReference type="STRING" id="208964.PA0592"/>
<dbReference type="BindingDB" id="Q9I5U5"/>
<dbReference type="ChEMBL" id="CHEMBL5169241"/>
<dbReference type="PaxDb" id="208964-PA0592"/>
<dbReference type="DNASU" id="880847"/>
<dbReference type="GeneID" id="880847"/>
<dbReference type="KEGG" id="pae:PA0592"/>
<dbReference type="PATRIC" id="fig|208964.12.peg.628"/>
<dbReference type="PseudoCAP" id="PA0592"/>
<dbReference type="HOGENOM" id="CLU_041220_0_1_6"/>
<dbReference type="InParanoid" id="Q9I5U5"/>
<dbReference type="OrthoDB" id="9814755at2"/>
<dbReference type="PhylomeDB" id="Q9I5U5"/>
<dbReference type="BioCyc" id="PAER208964:G1FZ6-599-MONOMER"/>
<dbReference type="Proteomes" id="UP000002438">
    <property type="component" value="Chromosome"/>
</dbReference>
<dbReference type="GO" id="GO:0005829">
    <property type="term" value="C:cytosol"/>
    <property type="evidence" value="ECO:0000318"/>
    <property type="project" value="GO_Central"/>
</dbReference>
<dbReference type="GO" id="GO:0052908">
    <property type="term" value="F:16S rRNA (adenine(1518)-N(6)/adenine(1519)-N(6))-dimethyltransferase activity"/>
    <property type="evidence" value="ECO:0007669"/>
    <property type="project" value="UniProtKB-EC"/>
</dbReference>
<dbReference type="GO" id="GO:0003723">
    <property type="term" value="F:RNA binding"/>
    <property type="evidence" value="ECO:0007669"/>
    <property type="project" value="UniProtKB-KW"/>
</dbReference>
<dbReference type="GO" id="GO:0000179">
    <property type="term" value="F:rRNA (adenine-N6,N6-)-dimethyltransferase activity"/>
    <property type="evidence" value="ECO:0000318"/>
    <property type="project" value="GO_Central"/>
</dbReference>
<dbReference type="GO" id="GO:0031167">
    <property type="term" value="P:rRNA methylation"/>
    <property type="evidence" value="ECO:0000318"/>
    <property type="project" value="GO_Central"/>
</dbReference>
<dbReference type="FunFam" id="1.10.8.100:FF:000001">
    <property type="entry name" value="Ribosomal RNA small subunit methyltransferase A"/>
    <property type="match status" value="1"/>
</dbReference>
<dbReference type="Gene3D" id="1.10.8.100">
    <property type="entry name" value="Ribosomal RNA adenine dimethylase-like, domain 2"/>
    <property type="match status" value="1"/>
</dbReference>
<dbReference type="Gene3D" id="3.40.50.150">
    <property type="entry name" value="Vaccinia Virus protein VP39"/>
    <property type="match status" value="1"/>
</dbReference>
<dbReference type="HAMAP" id="MF_00607">
    <property type="entry name" value="16SrRNA_methyltr_A"/>
    <property type="match status" value="1"/>
</dbReference>
<dbReference type="InterPro" id="IPR001737">
    <property type="entry name" value="KsgA/Erm"/>
</dbReference>
<dbReference type="InterPro" id="IPR023165">
    <property type="entry name" value="rRNA_Ade_diMease-like_C"/>
</dbReference>
<dbReference type="InterPro" id="IPR020596">
    <property type="entry name" value="rRNA_Ade_Mease_Trfase_CS"/>
</dbReference>
<dbReference type="InterPro" id="IPR020598">
    <property type="entry name" value="rRNA_Ade_methylase_Trfase_N"/>
</dbReference>
<dbReference type="InterPro" id="IPR011530">
    <property type="entry name" value="rRNA_adenine_dimethylase"/>
</dbReference>
<dbReference type="InterPro" id="IPR029063">
    <property type="entry name" value="SAM-dependent_MTases_sf"/>
</dbReference>
<dbReference type="NCBIfam" id="TIGR00755">
    <property type="entry name" value="ksgA"/>
    <property type="match status" value="1"/>
</dbReference>
<dbReference type="PANTHER" id="PTHR11727">
    <property type="entry name" value="DIMETHYLADENOSINE TRANSFERASE"/>
    <property type="match status" value="1"/>
</dbReference>
<dbReference type="PANTHER" id="PTHR11727:SF7">
    <property type="entry name" value="DIMETHYLADENOSINE TRANSFERASE-RELATED"/>
    <property type="match status" value="1"/>
</dbReference>
<dbReference type="Pfam" id="PF00398">
    <property type="entry name" value="RrnaAD"/>
    <property type="match status" value="1"/>
</dbReference>
<dbReference type="SMART" id="SM00650">
    <property type="entry name" value="rADc"/>
    <property type="match status" value="1"/>
</dbReference>
<dbReference type="SUPFAM" id="SSF53335">
    <property type="entry name" value="S-adenosyl-L-methionine-dependent methyltransferases"/>
    <property type="match status" value="1"/>
</dbReference>
<dbReference type="PROSITE" id="PS01131">
    <property type="entry name" value="RRNA_A_DIMETH"/>
    <property type="match status" value="1"/>
</dbReference>
<dbReference type="PROSITE" id="PS51689">
    <property type="entry name" value="SAM_RNA_A_N6_MT"/>
    <property type="match status" value="1"/>
</dbReference>
<keyword id="KW-0963">Cytoplasm</keyword>
<keyword id="KW-0489">Methyltransferase</keyword>
<keyword id="KW-1185">Reference proteome</keyword>
<keyword id="KW-0694">RNA-binding</keyword>
<keyword id="KW-0698">rRNA processing</keyword>
<keyword id="KW-0949">S-adenosyl-L-methionine</keyword>
<keyword id="KW-0808">Transferase</keyword>